<reference key="1">
    <citation type="journal article" date="1996" name="Gene">
        <title>Organization of the biosynthetic gene cluster for rapamycin in Streptomyces hygroscopicus: analysis of the enzymatic domains in the modular polyketide synthase.</title>
        <authorList>
            <person name="Aparicio J.F."/>
            <person name="Molnar I."/>
            <person name="Schwecke T."/>
            <person name="Koenig A."/>
            <person name="Haydock S.F."/>
            <person name="Khaw L.E."/>
            <person name="Staunton J."/>
            <person name="Leadlay P.F."/>
            <person name="Staunton J."/>
            <person name="Leadlay P.F."/>
        </authorList>
    </citation>
    <scope>NUCLEOTIDE SEQUENCE [GENOMIC DNA]</scope>
    <source>
        <strain>ATCC 29253 / DSM 41530 / NRRL 5491 / AYB-994</strain>
    </source>
</reference>
<reference key="2">
    <citation type="journal article" date="2013" name="Genome Announc.">
        <title>Draft genome sequence of Streptomyces rapamycinicus strain NRRL 5491, the producer of the immunosuppressant rapamycin.</title>
        <authorList>
            <person name="Baranasic D."/>
            <person name="Gacesa R."/>
            <person name="Starcevic A."/>
            <person name="Zucko J."/>
            <person name="Blazic M."/>
            <person name="Horvat M."/>
            <person name="Gjuracic K."/>
            <person name="Fujs S."/>
            <person name="Hranueli D."/>
            <person name="Kosec G."/>
            <person name="Cullum J."/>
            <person name="Petkovic H."/>
        </authorList>
    </citation>
    <scope>NUCLEOTIDE SEQUENCE [LARGE SCALE GENOMIC DNA]</scope>
    <source>
        <strain>ATCC 29253 / DSM 41530 / NRRL 5491 / AYB-994</strain>
    </source>
</reference>
<reference key="3">
    <citation type="journal article" date="1998" name="J. Bacteriol.">
        <title>Mutational biosynthesis of novel rapamycins by a strain of Streptomyces hygroscopicus NRRL 5491 disrupted in rapL, encoding a putative lysine cyclodeaminase.</title>
        <authorList>
            <person name="Khaw L.E."/>
            <person name="Bohm G.A."/>
            <person name="Metcalfe S."/>
            <person name="Staunton J."/>
            <person name="Leadlay P.F."/>
        </authorList>
    </citation>
    <scope>DISRUPTION PHENOTYPE</scope>
    <source>
        <strain>ATCC 29253 / DSM 41530 / NRRL 5491 / AYB-994</strain>
    </source>
</reference>
<reference key="4">
    <citation type="journal article" date="2006" name="J. Am. Chem. Soc.">
        <title>Biosynthesis of pipecolic acid by RapL, a lysine cyclodeaminase encoded in the rapamycin gene cluster.</title>
        <authorList>
            <person name="Gatto G.J. Jr."/>
            <person name="Boyne M.T. II"/>
            <person name="Kelleher N.L."/>
            <person name="Walsh C.T."/>
        </authorList>
    </citation>
    <scope>FUNCTION</scope>
    <scope>CATALYTIC ACTIVITY</scope>
    <scope>BIOPHYSICOCHEMICAL PROPERTIES</scope>
    <scope>COFACTOR</scope>
    <scope>ACTIVITY REGULATION</scope>
    <scope>PATHWAY</scope>
    <source>
        <strain>ATCC 29253 / DSM 41530 / NRRL 5491 / AYB-994</strain>
    </source>
</reference>
<feature type="chain" id="PRO_0000423987" description="L-lysine cyclodeaminase">
    <location>
        <begin position="1"/>
        <end position="343"/>
    </location>
</feature>
<feature type="sequence conflict" description="In Ref. 1; CAA60467." ref="1">
    <original>T</original>
    <variation>P</variation>
    <location>
        <position position="50"/>
    </location>
</feature>
<feature type="sequence conflict" description="In Ref. 1; CAA60467." ref="1">
    <original>Q</original>
    <variation>E</variation>
    <location>
        <position position="84"/>
    </location>
</feature>
<feature type="sequence conflict" description="In Ref. 1; CAA60467." ref="1">
    <original>D</original>
    <variation>G</variation>
    <location>
        <position position="102"/>
    </location>
</feature>
<feature type="sequence conflict" description="In Ref. 1; CAA60467." ref="1">
    <original>AVA</original>
    <variation>SVT</variation>
    <location>
        <begin position="127"/>
        <end position="129"/>
    </location>
</feature>
<accession>Q54304</accession>
<accession>A0A0A0NQJ4</accession>
<comment type="function">
    <text evidence="1">Converts L-lysine to L-pipecolate, which is incorporated into multiple secondary metabolite products, including rapamycin, tobulysin, virginiamycin and pristinamycin.</text>
</comment>
<comment type="catalytic activity">
    <reaction evidence="1">
        <text>L-lysine = L-pipecolate + NH4(+)</text>
        <dbReference type="Rhea" id="RHEA:34303"/>
        <dbReference type="ChEBI" id="CHEBI:28938"/>
        <dbReference type="ChEBI" id="CHEBI:32551"/>
        <dbReference type="ChEBI" id="CHEBI:61185"/>
        <dbReference type="EC" id="4.3.1.28"/>
    </reaction>
</comment>
<comment type="cofactor">
    <cofactor evidence="1">
        <name>NAD(+)</name>
        <dbReference type="ChEBI" id="CHEBI:57540"/>
    </cofactor>
</comment>
<comment type="activity regulation">
    <text evidence="1">Inhibited by nipecotic acid and thiazolidine-2-carboxylic acid.</text>
</comment>
<comment type="biophysicochemical properties">
    <kinetics>
        <KM evidence="1">46 uM for L-lysine</KM>
        <text>kcat is 0.61 min(-1) with L-lysine as substrate.</text>
    </kinetics>
</comment>
<comment type="pathway">
    <text evidence="1">Antibiotic biosynthesis.</text>
</comment>
<comment type="disruption phenotype">
    <text evidence="2">Cells do not produce significant amounts of rapamycin. Cells supplemented by L-pipecolate restore levels of rapamycin.</text>
</comment>
<comment type="similarity">
    <text evidence="3">Belongs to the ornithine cyclodeaminase/mu-crystallin family.</text>
</comment>
<name>RAPL_STRRN</name>
<dbReference type="EC" id="4.3.1.28"/>
<dbReference type="EMBL" id="X86780">
    <property type="protein sequence ID" value="CAA60467.1"/>
    <property type="molecule type" value="Genomic_DNA"/>
</dbReference>
<dbReference type="EMBL" id="CP006567">
    <property type="protein sequence ID" value="AGP59511.1"/>
    <property type="molecule type" value="Genomic_DNA"/>
</dbReference>
<dbReference type="PIR" id="T30233">
    <property type="entry name" value="T30233"/>
</dbReference>
<dbReference type="RefSeq" id="WP_020872992.1">
    <property type="nucleotide sequence ID" value="NC_022785.1"/>
</dbReference>
<dbReference type="SMR" id="Q54304"/>
<dbReference type="STRING" id="1343740.M271_40660"/>
<dbReference type="KEGG" id="ag:CAA60467"/>
<dbReference type="KEGG" id="src:M271_40660"/>
<dbReference type="PATRIC" id="fig|1343740.8.peg.6275"/>
<dbReference type="eggNOG" id="COG2423">
    <property type="taxonomic scope" value="Bacteria"/>
</dbReference>
<dbReference type="HOGENOM" id="CLU_042088_3_2_11"/>
<dbReference type="BioCyc" id="MetaCyc:MONOMER-17627"/>
<dbReference type="GO" id="GO:0005737">
    <property type="term" value="C:cytoplasm"/>
    <property type="evidence" value="ECO:0007669"/>
    <property type="project" value="TreeGrafter"/>
</dbReference>
<dbReference type="GO" id="GO:0016829">
    <property type="term" value="F:lyase activity"/>
    <property type="evidence" value="ECO:0007669"/>
    <property type="project" value="UniProtKB-KW"/>
</dbReference>
<dbReference type="GO" id="GO:0017000">
    <property type="term" value="P:antibiotic biosynthetic process"/>
    <property type="evidence" value="ECO:0007669"/>
    <property type="project" value="UniProtKB-KW"/>
</dbReference>
<dbReference type="Gene3D" id="3.40.50.720">
    <property type="entry name" value="NAD(P)-binding Rossmann-like Domain"/>
    <property type="match status" value="1"/>
</dbReference>
<dbReference type="Gene3D" id="3.30.1780.10">
    <property type="entry name" value="ornithine cyclodeaminase, domain 1"/>
    <property type="match status" value="1"/>
</dbReference>
<dbReference type="InterPro" id="IPR036291">
    <property type="entry name" value="NAD(P)-bd_dom_sf"/>
</dbReference>
<dbReference type="InterPro" id="IPR003462">
    <property type="entry name" value="ODC_Mu_crystall"/>
</dbReference>
<dbReference type="InterPro" id="IPR023401">
    <property type="entry name" value="ODC_N"/>
</dbReference>
<dbReference type="PANTHER" id="PTHR13812">
    <property type="entry name" value="KETIMINE REDUCTASE MU-CRYSTALLIN"/>
    <property type="match status" value="1"/>
</dbReference>
<dbReference type="PANTHER" id="PTHR13812:SF19">
    <property type="entry name" value="KETIMINE REDUCTASE MU-CRYSTALLIN"/>
    <property type="match status" value="1"/>
</dbReference>
<dbReference type="Pfam" id="PF02423">
    <property type="entry name" value="OCD_Mu_crystall"/>
    <property type="match status" value="1"/>
</dbReference>
<dbReference type="PIRSF" id="PIRSF001439">
    <property type="entry name" value="CryM"/>
    <property type="match status" value="1"/>
</dbReference>
<dbReference type="SUPFAM" id="SSF51735">
    <property type="entry name" value="NAD(P)-binding Rossmann-fold domains"/>
    <property type="match status" value="1"/>
</dbReference>
<sequence>MQTKVLCQRDIKRILSVVGRDVMMDRLISEVHAGFARLGRGETDEPPPRTGFARGGDVPGVIEFMPHRASGIGVTMKTVSYSPQNFERFNLPTIVGTVSRLDDDSGSMVALADAATITAMRTGAVAAVATRLLARPGSTTLALIGAGAQAVTQAHALSRVLPLERILISDIKAEHAESFAGRVAFLELPVEVTDAATAMATADVLCTVTSVPVGGGPVVPAEPRQAHLHVNGIGADEQGKTELPKALLDDAFICVDHPGQARAEGEFQQLPDRELGPSLADLCAAPEIAAPHPERLSVFDSTGSAFADHIALDVLLGFADELGLGHKMSIESTPEDVLDPYSL</sequence>
<gene>
    <name type="primary">rapL</name>
    <name evidence="4" type="ORF">M271_40660</name>
</gene>
<organism>
    <name type="scientific">Streptomyces rapamycinicus (strain ATCC 29253 / DSM 41530 / NRRL 5491 / AYB-994)</name>
    <name type="common">Streptomyces hygroscopicus (strain ATCC 29253)</name>
    <dbReference type="NCBI Taxonomy" id="1343740"/>
    <lineage>
        <taxon>Bacteria</taxon>
        <taxon>Bacillati</taxon>
        <taxon>Actinomycetota</taxon>
        <taxon>Actinomycetes</taxon>
        <taxon>Kitasatosporales</taxon>
        <taxon>Streptomycetaceae</taxon>
        <taxon>Streptomyces</taxon>
        <taxon>Streptomyces violaceusniger group</taxon>
    </lineage>
</organism>
<keyword id="KW-0045">Antibiotic biosynthesis</keyword>
<keyword id="KW-0456">Lyase</keyword>
<keyword id="KW-0520">NAD</keyword>
<protein>
    <recommendedName>
        <fullName>L-lysine cyclodeaminase</fullName>
        <ecNumber>4.3.1.28</ecNumber>
    </recommendedName>
    <alternativeName>
        <fullName>Rapamycin biosynthesis protein L</fullName>
    </alternativeName>
</protein>
<proteinExistence type="evidence at protein level"/>
<evidence type="ECO:0000269" key="1">
    <source>
    </source>
</evidence>
<evidence type="ECO:0000269" key="2">
    <source>
    </source>
</evidence>
<evidence type="ECO:0000305" key="3"/>
<evidence type="ECO:0000312" key="4">
    <source>
        <dbReference type="EMBL" id="AGP59511.1"/>
    </source>
</evidence>